<comment type="function">
    <text evidence="1">Catalyzes the attachment of threonine to tRNA(Thr) in a two-step reaction: L-threonine is first activated by ATP to form Thr-AMP and then transferred to the acceptor end of tRNA(Thr). Also edits incorrectly charged L-seryl-tRNA(Thr).</text>
</comment>
<comment type="catalytic activity">
    <reaction evidence="1">
        <text>tRNA(Thr) + L-threonine + ATP = L-threonyl-tRNA(Thr) + AMP + diphosphate + H(+)</text>
        <dbReference type="Rhea" id="RHEA:24624"/>
        <dbReference type="Rhea" id="RHEA-COMP:9670"/>
        <dbReference type="Rhea" id="RHEA-COMP:9704"/>
        <dbReference type="ChEBI" id="CHEBI:15378"/>
        <dbReference type="ChEBI" id="CHEBI:30616"/>
        <dbReference type="ChEBI" id="CHEBI:33019"/>
        <dbReference type="ChEBI" id="CHEBI:57926"/>
        <dbReference type="ChEBI" id="CHEBI:78442"/>
        <dbReference type="ChEBI" id="CHEBI:78534"/>
        <dbReference type="ChEBI" id="CHEBI:456215"/>
        <dbReference type="EC" id="6.1.1.3"/>
    </reaction>
</comment>
<comment type="cofactor">
    <cofactor evidence="1">
        <name>Zn(2+)</name>
        <dbReference type="ChEBI" id="CHEBI:29105"/>
    </cofactor>
    <text evidence="1">Binds 1 zinc ion per subunit.</text>
</comment>
<comment type="subunit">
    <text evidence="1">Homodimer.</text>
</comment>
<comment type="subcellular location">
    <subcellularLocation>
        <location evidence="1">Cytoplasm</location>
    </subcellularLocation>
</comment>
<comment type="similarity">
    <text evidence="1">Belongs to the class-II aminoacyl-tRNA synthetase family.</text>
</comment>
<proteinExistence type="inferred from homology"/>
<name>SYT_PECAS</name>
<feature type="chain" id="PRO_0000100979" description="Threonine--tRNA ligase">
    <location>
        <begin position="1"/>
        <end position="642"/>
    </location>
</feature>
<feature type="domain" description="TGS" evidence="2">
    <location>
        <begin position="1"/>
        <end position="61"/>
    </location>
</feature>
<feature type="region of interest" description="Catalytic" evidence="1">
    <location>
        <begin position="243"/>
        <end position="534"/>
    </location>
</feature>
<feature type="binding site" evidence="1">
    <location>
        <position position="334"/>
    </location>
    <ligand>
        <name>Zn(2+)</name>
        <dbReference type="ChEBI" id="CHEBI:29105"/>
    </ligand>
</feature>
<feature type="binding site" evidence="1">
    <location>
        <position position="385"/>
    </location>
    <ligand>
        <name>Zn(2+)</name>
        <dbReference type="ChEBI" id="CHEBI:29105"/>
    </ligand>
</feature>
<feature type="binding site" evidence="1">
    <location>
        <position position="511"/>
    </location>
    <ligand>
        <name>Zn(2+)</name>
        <dbReference type="ChEBI" id="CHEBI:29105"/>
    </ligand>
</feature>
<keyword id="KW-0030">Aminoacyl-tRNA synthetase</keyword>
<keyword id="KW-0067">ATP-binding</keyword>
<keyword id="KW-0963">Cytoplasm</keyword>
<keyword id="KW-0436">Ligase</keyword>
<keyword id="KW-0479">Metal-binding</keyword>
<keyword id="KW-0547">Nucleotide-binding</keyword>
<keyword id="KW-0648">Protein biosynthesis</keyword>
<keyword id="KW-1185">Reference proteome</keyword>
<keyword id="KW-0694">RNA-binding</keyword>
<keyword id="KW-0820">tRNA-binding</keyword>
<keyword id="KW-0862">Zinc</keyword>
<protein>
    <recommendedName>
        <fullName evidence="1">Threonine--tRNA ligase</fullName>
        <ecNumber evidence="1">6.1.1.3</ecNumber>
    </recommendedName>
    <alternativeName>
        <fullName evidence="1">Threonyl-tRNA synthetase</fullName>
        <shortName evidence="1">ThrRS</shortName>
    </alternativeName>
</protein>
<gene>
    <name evidence="1" type="primary">thrS</name>
    <name type="ordered locus">ECA2422</name>
</gene>
<dbReference type="EC" id="6.1.1.3" evidence="1"/>
<dbReference type="EMBL" id="BX950851">
    <property type="protein sequence ID" value="CAG75325.1"/>
    <property type="molecule type" value="Genomic_DNA"/>
</dbReference>
<dbReference type="RefSeq" id="WP_011093974.1">
    <property type="nucleotide sequence ID" value="NC_004547.2"/>
</dbReference>
<dbReference type="SMR" id="Q6D4G8"/>
<dbReference type="STRING" id="218491.ECA2422"/>
<dbReference type="GeneID" id="57208862"/>
<dbReference type="KEGG" id="eca:ECA2422"/>
<dbReference type="PATRIC" id="fig|218491.5.peg.2453"/>
<dbReference type="eggNOG" id="COG0441">
    <property type="taxonomic scope" value="Bacteria"/>
</dbReference>
<dbReference type="HOGENOM" id="CLU_008554_0_1_6"/>
<dbReference type="OrthoDB" id="9802304at2"/>
<dbReference type="Proteomes" id="UP000007966">
    <property type="component" value="Chromosome"/>
</dbReference>
<dbReference type="GO" id="GO:0005829">
    <property type="term" value="C:cytosol"/>
    <property type="evidence" value="ECO:0007669"/>
    <property type="project" value="TreeGrafter"/>
</dbReference>
<dbReference type="GO" id="GO:0005524">
    <property type="term" value="F:ATP binding"/>
    <property type="evidence" value="ECO:0007669"/>
    <property type="project" value="UniProtKB-UniRule"/>
</dbReference>
<dbReference type="GO" id="GO:0046872">
    <property type="term" value="F:metal ion binding"/>
    <property type="evidence" value="ECO:0007669"/>
    <property type="project" value="UniProtKB-KW"/>
</dbReference>
<dbReference type="GO" id="GO:0004829">
    <property type="term" value="F:threonine-tRNA ligase activity"/>
    <property type="evidence" value="ECO:0007669"/>
    <property type="project" value="UniProtKB-UniRule"/>
</dbReference>
<dbReference type="GO" id="GO:0000049">
    <property type="term" value="F:tRNA binding"/>
    <property type="evidence" value="ECO:0007669"/>
    <property type="project" value="UniProtKB-KW"/>
</dbReference>
<dbReference type="GO" id="GO:0006435">
    <property type="term" value="P:threonyl-tRNA aminoacylation"/>
    <property type="evidence" value="ECO:0007669"/>
    <property type="project" value="UniProtKB-UniRule"/>
</dbReference>
<dbReference type="CDD" id="cd01667">
    <property type="entry name" value="TGS_ThrRS"/>
    <property type="match status" value="1"/>
</dbReference>
<dbReference type="CDD" id="cd00860">
    <property type="entry name" value="ThrRS_anticodon"/>
    <property type="match status" value="1"/>
</dbReference>
<dbReference type="CDD" id="cd00771">
    <property type="entry name" value="ThrRS_core"/>
    <property type="match status" value="1"/>
</dbReference>
<dbReference type="FunFam" id="3.10.20.30:FF:000005">
    <property type="entry name" value="Threonine--tRNA ligase"/>
    <property type="match status" value="1"/>
</dbReference>
<dbReference type="FunFam" id="3.30.54.20:FF:000002">
    <property type="entry name" value="Threonine--tRNA ligase"/>
    <property type="match status" value="1"/>
</dbReference>
<dbReference type="FunFam" id="3.30.930.10:FF:000002">
    <property type="entry name" value="Threonine--tRNA ligase"/>
    <property type="match status" value="1"/>
</dbReference>
<dbReference type="FunFam" id="3.40.50.800:FF:000001">
    <property type="entry name" value="Threonine--tRNA ligase"/>
    <property type="match status" value="1"/>
</dbReference>
<dbReference type="FunFam" id="3.30.980.10:FF:000005">
    <property type="entry name" value="Threonyl-tRNA synthetase, mitochondrial"/>
    <property type="match status" value="1"/>
</dbReference>
<dbReference type="Gene3D" id="3.10.20.30">
    <property type="match status" value="1"/>
</dbReference>
<dbReference type="Gene3D" id="3.30.54.20">
    <property type="match status" value="1"/>
</dbReference>
<dbReference type="Gene3D" id="3.40.50.800">
    <property type="entry name" value="Anticodon-binding domain"/>
    <property type="match status" value="1"/>
</dbReference>
<dbReference type="Gene3D" id="3.30.930.10">
    <property type="entry name" value="Bira Bifunctional Protein, Domain 2"/>
    <property type="match status" value="1"/>
</dbReference>
<dbReference type="Gene3D" id="3.30.980.10">
    <property type="entry name" value="Threonyl-trna Synthetase, Chain A, domain 2"/>
    <property type="match status" value="1"/>
</dbReference>
<dbReference type="HAMAP" id="MF_00184">
    <property type="entry name" value="Thr_tRNA_synth"/>
    <property type="match status" value="1"/>
</dbReference>
<dbReference type="InterPro" id="IPR002314">
    <property type="entry name" value="aa-tRNA-synt_IIb"/>
</dbReference>
<dbReference type="InterPro" id="IPR006195">
    <property type="entry name" value="aa-tRNA-synth_II"/>
</dbReference>
<dbReference type="InterPro" id="IPR045864">
    <property type="entry name" value="aa-tRNA-synth_II/BPL/LPL"/>
</dbReference>
<dbReference type="InterPro" id="IPR004154">
    <property type="entry name" value="Anticodon-bd"/>
</dbReference>
<dbReference type="InterPro" id="IPR036621">
    <property type="entry name" value="Anticodon-bd_dom_sf"/>
</dbReference>
<dbReference type="InterPro" id="IPR012675">
    <property type="entry name" value="Beta-grasp_dom_sf"/>
</dbReference>
<dbReference type="InterPro" id="IPR004095">
    <property type="entry name" value="TGS"/>
</dbReference>
<dbReference type="InterPro" id="IPR012676">
    <property type="entry name" value="TGS-like"/>
</dbReference>
<dbReference type="InterPro" id="IPR002320">
    <property type="entry name" value="Thr-tRNA-ligase_IIa"/>
</dbReference>
<dbReference type="InterPro" id="IPR018163">
    <property type="entry name" value="Thr/Ala-tRNA-synth_IIc_edit"/>
</dbReference>
<dbReference type="InterPro" id="IPR047246">
    <property type="entry name" value="ThrRS_anticodon"/>
</dbReference>
<dbReference type="InterPro" id="IPR033728">
    <property type="entry name" value="ThrRS_core"/>
</dbReference>
<dbReference type="InterPro" id="IPR012947">
    <property type="entry name" value="tRNA_SAD"/>
</dbReference>
<dbReference type="NCBIfam" id="TIGR00418">
    <property type="entry name" value="thrS"/>
    <property type="match status" value="1"/>
</dbReference>
<dbReference type="PANTHER" id="PTHR11451:SF44">
    <property type="entry name" value="THREONINE--TRNA LIGASE, CHLOROPLASTIC_MITOCHONDRIAL 2"/>
    <property type="match status" value="1"/>
</dbReference>
<dbReference type="PANTHER" id="PTHR11451">
    <property type="entry name" value="THREONINE-TRNA LIGASE"/>
    <property type="match status" value="1"/>
</dbReference>
<dbReference type="Pfam" id="PF03129">
    <property type="entry name" value="HGTP_anticodon"/>
    <property type="match status" value="1"/>
</dbReference>
<dbReference type="Pfam" id="PF02824">
    <property type="entry name" value="TGS"/>
    <property type="match status" value="1"/>
</dbReference>
<dbReference type="Pfam" id="PF00587">
    <property type="entry name" value="tRNA-synt_2b"/>
    <property type="match status" value="1"/>
</dbReference>
<dbReference type="Pfam" id="PF07973">
    <property type="entry name" value="tRNA_SAD"/>
    <property type="match status" value="1"/>
</dbReference>
<dbReference type="PRINTS" id="PR01047">
    <property type="entry name" value="TRNASYNTHTHR"/>
</dbReference>
<dbReference type="SMART" id="SM00863">
    <property type="entry name" value="tRNA_SAD"/>
    <property type="match status" value="1"/>
</dbReference>
<dbReference type="SUPFAM" id="SSF52954">
    <property type="entry name" value="Class II aaRS ABD-related"/>
    <property type="match status" value="1"/>
</dbReference>
<dbReference type="SUPFAM" id="SSF55681">
    <property type="entry name" value="Class II aaRS and biotin synthetases"/>
    <property type="match status" value="1"/>
</dbReference>
<dbReference type="SUPFAM" id="SSF81271">
    <property type="entry name" value="TGS-like"/>
    <property type="match status" value="1"/>
</dbReference>
<dbReference type="SUPFAM" id="SSF55186">
    <property type="entry name" value="ThrRS/AlaRS common domain"/>
    <property type="match status" value="1"/>
</dbReference>
<dbReference type="PROSITE" id="PS50862">
    <property type="entry name" value="AA_TRNA_LIGASE_II"/>
    <property type="match status" value="1"/>
</dbReference>
<dbReference type="PROSITE" id="PS51880">
    <property type="entry name" value="TGS"/>
    <property type="match status" value="1"/>
</dbReference>
<reference key="1">
    <citation type="journal article" date="2004" name="Proc. Natl. Acad. Sci. U.S.A.">
        <title>Genome sequence of the enterobacterial phytopathogen Erwinia carotovora subsp. atroseptica and characterization of virulence factors.</title>
        <authorList>
            <person name="Bell K.S."/>
            <person name="Sebaihia M."/>
            <person name="Pritchard L."/>
            <person name="Holden M.T.G."/>
            <person name="Hyman L.J."/>
            <person name="Holeva M.C."/>
            <person name="Thomson N.R."/>
            <person name="Bentley S.D."/>
            <person name="Churcher L.J.C."/>
            <person name="Mungall K."/>
            <person name="Atkin R."/>
            <person name="Bason N."/>
            <person name="Brooks K."/>
            <person name="Chillingworth T."/>
            <person name="Clark K."/>
            <person name="Doggett J."/>
            <person name="Fraser A."/>
            <person name="Hance Z."/>
            <person name="Hauser H."/>
            <person name="Jagels K."/>
            <person name="Moule S."/>
            <person name="Norbertczak H."/>
            <person name="Ormond D."/>
            <person name="Price C."/>
            <person name="Quail M.A."/>
            <person name="Sanders M."/>
            <person name="Walker D."/>
            <person name="Whitehead S."/>
            <person name="Salmond G.P.C."/>
            <person name="Birch P.R.J."/>
            <person name="Parkhill J."/>
            <person name="Toth I.K."/>
        </authorList>
    </citation>
    <scope>NUCLEOTIDE SEQUENCE [LARGE SCALE GENOMIC DNA]</scope>
    <source>
        <strain>SCRI 1043 / ATCC BAA-672</strain>
    </source>
</reference>
<sequence>MPVITLPDGSQRHYDHAVSPLDVALDIGPGLAKACIAGRVDGELIDASDKIDTDAQLAIITAKDDAGLEIIRHSCAHLLGHAIKQLWPDTKMAIGPVIDNGFYYDVDIDRTLTQEDIELLEKRMHELADTDYDVIKKKVSWQEARDAFAARGETYKIAILDENISHDDRPGLYHHEEYIDMCRGPHVPNMRFCHHFKLQKTSGAYWRGDSKNKMLQRIYGTAWADKKQLASYLQRLEEASKRDHRKIGKQLDLYHMQEEAPGMVFWHNDGWTIFRELEAFVRMKLKSYQYQEVKGPFMMDRVMWEKTGHWDNYKEAMFTTSSENREYCIKPMNCPGHVQIFNQGLKSYRDLPLRMAEFGSCHRNEPSGSLHGLMRVRGFTQDDAHIFCTEEQVRDEVNSCIKMVYDMYSTFGFEKIVVKLSTRPEKRIGSDEMWDRAEADLAAALTENNIEFAYQPGEGAFYGPKIEFTLHDCLDRAWQCGTVQLDFSLPGRLSASYVGESNERQVPVMIHRAILGSMERFIGILTEEFAGFFPTWLAPVQVVIINITDSQSDYVNELTQKLQEAGIRVKADLRNEKIGFKIREHTLRRVPYMLVCGDKEVEAGKVAVRTRRGKDLGSLDVSEVISKLQQEIRSRSLHQLEV</sequence>
<accession>Q6D4G8</accession>
<evidence type="ECO:0000255" key="1">
    <source>
        <dbReference type="HAMAP-Rule" id="MF_00184"/>
    </source>
</evidence>
<evidence type="ECO:0000255" key="2">
    <source>
        <dbReference type="PROSITE-ProRule" id="PRU01228"/>
    </source>
</evidence>
<organism>
    <name type="scientific">Pectobacterium atrosepticum (strain SCRI 1043 / ATCC BAA-672)</name>
    <name type="common">Erwinia carotovora subsp. atroseptica</name>
    <dbReference type="NCBI Taxonomy" id="218491"/>
    <lineage>
        <taxon>Bacteria</taxon>
        <taxon>Pseudomonadati</taxon>
        <taxon>Pseudomonadota</taxon>
        <taxon>Gammaproteobacteria</taxon>
        <taxon>Enterobacterales</taxon>
        <taxon>Pectobacteriaceae</taxon>
        <taxon>Pectobacterium</taxon>
    </lineage>
</organism>